<name>HSLO_AGARV</name>
<feature type="chain" id="PRO_1000202996" description="33 kDa chaperonin">
    <location>
        <begin position="1"/>
        <end position="288"/>
    </location>
</feature>
<feature type="disulfide bond" description="Redox-active" evidence="1">
    <location>
        <begin position="237"/>
        <end position="239"/>
    </location>
</feature>
<feature type="disulfide bond" description="Redox-active" evidence="1">
    <location>
        <begin position="270"/>
        <end position="273"/>
    </location>
</feature>
<protein>
    <recommendedName>
        <fullName evidence="1">33 kDa chaperonin</fullName>
    </recommendedName>
    <alternativeName>
        <fullName evidence="1">Heat shock protein 33 homolog</fullName>
        <shortName evidence="1">HSP33</shortName>
    </alternativeName>
</protein>
<proteinExistence type="inferred from homology"/>
<organism>
    <name type="scientific">Agathobacter rectalis (strain ATCC 33656 / DSM 3377 / JCM 17463 / KCTC 5835 / VPI 0990)</name>
    <name type="common">Eubacterium rectale</name>
    <dbReference type="NCBI Taxonomy" id="515619"/>
    <lineage>
        <taxon>Bacteria</taxon>
        <taxon>Bacillati</taxon>
        <taxon>Bacillota</taxon>
        <taxon>Clostridia</taxon>
        <taxon>Lachnospirales</taxon>
        <taxon>Lachnospiraceae</taxon>
        <taxon>Agathobacter</taxon>
    </lineage>
</organism>
<reference key="1">
    <citation type="journal article" date="2009" name="Proc. Natl. Acad. Sci. U.S.A.">
        <title>Characterizing a model human gut microbiota composed of members of its two dominant bacterial phyla.</title>
        <authorList>
            <person name="Mahowald M.A."/>
            <person name="Rey F.E."/>
            <person name="Seedorf H."/>
            <person name="Turnbaugh P.J."/>
            <person name="Fulton R.S."/>
            <person name="Wollam A."/>
            <person name="Shah N."/>
            <person name="Wang C."/>
            <person name="Magrini V."/>
            <person name="Wilson R.K."/>
            <person name="Cantarel B.L."/>
            <person name="Coutinho P.M."/>
            <person name="Henrissat B."/>
            <person name="Crock L.W."/>
            <person name="Russell A."/>
            <person name="Verberkmoes N.C."/>
            <person name="Hettich R.L."/>
            <person name="Gordon J.I."/>
        </authorList>
    </citation>
    <scope>NUCLEOTIDE SEQUENCE [LARGE SCALE GENOMIC DNA]</scope>
    <source>
        <strain>ATCC 33656 / DSM 3377 / JCM 17463 / KCTC 5835 / LMG 30912 / VPI 0990</strain>
    </source>
</reference>
<evidence type="ECO:0000255" key="1">
    <source>
        <dbReference type="HAMAP-Rule" id="MF_00117"/>
    </source>
</evidence>
<sequence length="288" mass="31288">MSDYIVRATAADANIRAFAVTSKEMVENAREDHMTTPVMTAALGRLLSAGAMMGAMMKGDKDIITLQIQCSGPAKGLTVTADSHGNVKGFAMNPQVELPLNAAGKLDVGGALDLGILTVIKDMGLKEPYSGQCELKTGEIAEDLTYYFATSEQIPSAVGLGVLVDKDQSVKQSGGFIIQLMPFTPEDVVDRLEKKITEIDSVTQMLDRGLTPEQILEEILGDFGLEITDTTETRFHCDCSKERVSRALSTLSKKDLDSIIADGESIEVKCQFCNKAYEFTVDELKEMR</sequence>
<dbReference type="EMBL" id="CP001107">
    <property type="protein sequence ID" value="ACR75117.1"/>
    <property type="molecule type" value="Genomic_DNA"/>
</dbReference>
<dbReference type="RefSeq" id="WP_012742216.1">
    <property type="nucleotide sequence ID" value="NC_012781.1"/>
</dbReference>
<dbReference type="SMR" id="C4Z899"/>
<dbReference type="STRING" id="515619.EUBREC_1357"/>
<dbReference type="PaxDb" id="515619-EUBREC_1357"/>
<dbReference type="GeneID" id="86988180"/>
<dbReference type="KEGG" id="ere:EUBREC_1357"/>
<dbReference type="HOGENOM" id="CLU_054493_1_0_9"/>
<dbReference type="Proteomes" id="UP000001477">
    <property type="component" value="Chromosome"/>
</dbReference>
<dbReference type="GO" id="GO:0005737">
    <property type="term" value="C:cytoplasm"/>
    <property type="evidence" value="ECO:0007669"/>
    <property type="project" value="UniProtKB-SubCell"/>
</dbReference>
<dbReference type="GO" id="GO:0044183">
    <property type="term" value="F:protein folding chaperone"/>
    <property type="evidence" value="ECO:0007669"/>
    <property type="project" value="TreeGrafter"/>
</dbReference>
<dbReference type="GO" id="GO:0051082">
    <property type="term" value="F:unfolded protein binding"/>
    <property type="evidence" value="ECO:0007669"/>
    <property type="project" value="UniProtKB-UniRule"/>
</dbReference>
<dbReference type="GO" id="GO:0042026">
    <property type="term" value="P:protein refolding"/>
    <property type="evidence" value="ECO:0007669"/>
    <property type="project" value="TreeGrafter"/>
</dbReference>
<dbReference type="CDD" id="cd00498">
    <property type="entry name" value="Hsp33"/>
    <property type="match status" value="1"/>
</dbReference>
<dbReference type="Gene3D" id="3.55.30.10">
    <property type="entry name" value="Hsp33 domain"/>
    <property type="match status" value="1"/>
</dbReference>
<dbReference type="Gene3D" id="3.90.1280.10">
    <property type="entry name" value="HSP33 redox switch-like"/>
    <property type="match status" value="1"/>
</dbReference>
<dbReference type="HAMAP" id="MF_00117">
    <property type="entry name" value="HslO"/>
    <property type="match status" value="1"/>
</dbReference>
<dbReference type="InterPro" id="IPR000397">
    <property type="entry name" value="Heat_shock_Hsp33"/>
</dbReference>
<dbReference type="InterPro" id="IPR016154">
    <property type="entry name" value="Heat_shock_Hsp33_C"/>
</dbReference>
<dbReference type="InterPro" id="IPR016153">
    <property type="entry name" value="Heat_shock_Hsp33_N"/>
</dbReference>
<dbReference type="NCBIfam" id="NF001033">
    <property type="entry name" value="PRK00114.1"/>
    <property type="match status" value="1"/>
</dbReference>
<dbReference type="PANTHER" id="PTHR30111">
    <property type="entry name" value="33 KDA CHAPERONIN"/>
    <property type="match status" value="1"/>
</dbReference>
<dbReference type="PANTHER" id="PTHR30111:SF1">
    <property type="entry name" value="33 KDA CHAPERONIN"/>
    <property type="match status" value="1"/>
</dbReference>
<dbReference type="Pfam" id="PF01430">
    <property type="entry name" value="HSP33"/>
    <property type="match status" value="1"/>
</dbReference>
<dbReference type="PIRSF" id="PIRSF005261">
    <property type="entry name" value="Heat_shock_Hsp33"/>
    <property type="match status" value="1"/>
</dbReference>
<dbReference type="SUPFAM" id="SSF64397">
    <property type="entry name" value="Hsp33 domain"/>
    <property type="match status" value="1"/>
</dbReference>
<dbReference type="SUPFAM" id="SSF118352">
    <property type="entry name" value="HSP33 redox switch-like"/>
    <property type="match status" value="1"/>
</dbReference>
<gene>
    <name evidence="1" type="primary">hslO</name>
    <name type="ordered locus">EUBREC_1357</name>
</gene>
<accession>C4Z899</accession>
<comment type="function">
    <text evidence="1">Redox regulated molecular chaperone. Protects both thermally unfolding and oxidatively damaged proteins from irreversible aggregation. Plays an important role in the bacterial defense system toward oxidative stress.</text>
</comment>
<comment type="subcellular location">
    <subcellularLocation>
        <location evidence="1">Cytoplasm</location>
    </subcellularLocation>
</comment>
<comment type="PTM">
    <text evidence="1">Under oxidizing conditions two disulfide bonds are formed involving the reactive cysteines. Under reducing conditions zinc is bound to the reactive cysteines and the protein is inactive.</text>
</comment>
<comment type="similarity">
    <text evidence="1">Belongs to the HSP33 family.</text>
</comment>
<keyword id="KW-0143">Chaperone</keyword>
<keyword id="KW-0963">Cytoplasm</keyword>
<keyword id="KW-1015">Disulfide bond</keyword>
<keyword id="KW-0676">Redox-active center</keyword>
<keyword id="KW-0862">Zinc</keyword>